<accession>Q1JID8</accession>
<feature type="chain" id="PRO_1000012388" description="UDP-N-acetylmuramoyl-L-alanyl-D-glutamate--L-lysine ligase">
    <location>
        <begin position="1"/>
        <end position="481"/>
    </location>
</feature>
<feature type="short sequence motif" description="L-lysine recognition motif">
    <location>
        <begin position="404"/>
        <end position="407"/>
    </location>
</feature>
<feature type="binding site" evidence="1">
    <location>
        <position position="42"/>
    </location>
    <ligand>
        <name>UDP-N-acetyl-alpha-D-muramoyl-L-alanyl-D-glutamate</name>
        <dbReference type="ChEBI" id="CHEBI:83900"/>
    </ligand>
</feature>
<feature type="binding site" evidence="1">
    <location>
        <begin position="118"/>
        <end position="124"/>
    </location>
    <ligand>
        <name>ATP</name>
        <dbReference type="ChEBI" id="CHEBI:30616"/>
    </ligand>
</feature>
<feature type="binding site" evidence="1">
    <location>
        <position position="158"/>
    </location>
    <ligand>
        <name>UDP-N-acetyl-alpha-D-muramoyl-L-alanyl-D-glutamate</name>
        <dbReference type="ChEBI" id="CHEBI:83900"/>
    </ligand>
</feature>
<feature type="binding site" evidence="1">
    <location>
        <begin position="160"/>
        <end position="161"/>
    </location>
    <ligand>
        <name>UDP-N-acetyl-alpha-D-muramoyl-L-alanyl-D-glutamate</name>
        <dbReference type="ChEBI" id="CHEBI:83900"/>
    </ligand>
</feature>
<feature type="binding site" evidence="1">
    <location>
        <position position="187"/>
    </location>
    <ligand>
        <name>UDP-N-acetyl-alpha-D-muramoyl-L-alanyl-D-glutamate</name>
        <dbReference type="ChEBI" id="CHEBI:83900"/>
    </ligand>
</feature>
<feature type="binding site" evidence="1">
    <location>
        <position position="195"/>
    </location>
    <ligand>
        <name>UDP-N-acetyl-alpha-D-muramoyl-L-alanyl-D-glutamate</name>
        <dbReference type="ChEBI" id="CHEBI:83900"/>
    </ligand>
</feature>
<feature type="modified residue" description="N6-carboxylysine" evidence="1">
    <location>
        <position position="229"/>
    </location>
</feature>
<comment type="function">
    <text evidence="1">Catalyzes the addition of L-lysine to the nucleotide precursor UDP-N-acetylmuramoyl-L-alanyl-D-glutamate (UMAG) in the biosynthesis of bacterial cell-wall peptidoglycan.</text>
</comment>
<comment type="catalytic activity">
    <reaction evidence="1">
        <text>UDP-N-acetyl-alpha-D-muramoyl-L-alanyl-D-glutamate + L-lysine + ATP = UDP-N-acetyl-alpha-D-muramoyl-L-alanyl-gamma-D-glutamyl-L-lysine + ADP + phosphate + H(+)</text>
        <dbReference type="Rhea" id="RHEA:17969"/>
        <dbReference type="ChEBI" id="CHEBI:15378"/>
        <dbReference type="ChEBI" id="CHEBI:30616"/>
        <dbReference type="ChEBI" id="CHEBI:32551"/>
        <dbReference type="ChEBI" id="CHEBI:43474"/>
        <dbReference type="ChEBI" id="CHEBI:83900"/>
        <dbReference type="ChEBI" id="CHEBI:83903"/>
        <dbReference type="ChEBI" id="CHEBI:456216"/>
        <dbReference type="EC" id="6.3.2.7"/>
    </reaction>
</comment>
<comment type="pathway">
    <text evidence="1">Cell wall biogenesis; peptidoglycan biosynthesis.</text>
</comment>
<comment type="subcellular location">
    <subcellularLocation>
        <location evidence="1">Cytoplasm</location>
    </subcellularLocation>
</comment>
<comment type="PTM">
    <text evidence="1">Carboxylation is probably crucial for Mg(2+) binding and, consequently, for the gamma-phosphate positioning of ATP.</text>
</comment>
<comment type="similarity">
    <text evidence="1">Belongs to the MurCDEF family. MurE subfamily.</text>
</comment>
<dbReference type="EC" id="6.3.2.7" evidence="1"/>
<dbReference type="EMBL" id="CP000260">
    <property type="protein sequence ID" value="ABF33385.1"/>
    <property type="molecule type" value="Genomic_DNA"/>
</dbReference>
<dbReference type="SMR" id="Q1JID8"/>
<dbReference type="KEGG" id="sph:MGAS10270_Spy0320"/>
<dbReference type="HOGENOM" id="CLU_022291_4_2_9"/>
<dbReference type="UniPathway" id="UPA00219"/>
<dbReference type="Proteomes" id="UP000002436">
    <property type="component" value="Chromosome"/>
</dbReference>
<dbReference type="GO" id="GO:0005737">
    <property type="term" value="C:cytoplasm"/>
    <property type="evidence" value="ECO:0007669"/>
    <property type="project" value="UniProtKB-SubCell"/>
</dbReference>
<dbReference type="GO" id="GO:0005524">
    <property type="term" value="F:ATP binding"/>
    <property type="evidence" value="ECO:0007669"/>
    <property type="project" value="UniProtKB-UniRule"/>
</dbReference>
<dbReference type="GO" id="GO:0000287">
    <property type="term" value="F:magnesium ion binding"/>
    <property type="evidence" value="ECO:0007669"/>
    <property type="project" value="UniProtKB-UniRule"/>
</dbReference>
<dbReference type="GO" id="GO:0047482">
    <property type="term" value="F:UDP-N-acetylmuramoyl-L-alanyl-D-glutamate-L-lysine ligase activity"/>
    <property type="evidence" value="ECO:0007669"/>
    <property type="project" value="UniProtKB-UniRule"/>
</dbReference>
<dbReference type="GO" id="GO:0051301">
    <property type="term" value="P:cell division"/>
    <property type="evidence" value="ECO:0007669"/>
    <property type="project" value="UniProtKB-KW"/>
</dbReference>
<dbReference type="GO" id="GO:0071555">
    <property type="term" value="P:cell wall organization"/>
    <property type="evidence" value="ECO:0007669"/>
    <property type="project" value="UniProtKB-KW"/>
</dbReference>
<dbReference type="GO" id="GO:0009252">
    <property type="term" value="P:peptidoglycan biosynthetic process"/>
    <property type="evidence" value="ECO:0007669"/>
    <property type="project" value="UniProtKB-UniRule"/>
</dbReference>
<dbReference type="GO" id="GO:0008360">
    <property type="term" value="P:regulation of cell shape"/>
    <property type="evidence" value="ECO:0007669"/>
    <property type="project" value="UniProtKB-KW"/>
</dbReference>
<dbReference type="Gene3D" id="3.90.190.20">
    <property type="entry name" value="Mur ligase, C-terminal domain"/>
    <property type="match status" value="1"/>
</dbReference>
<dbReference type="Gene3D" id="3.40.1190.10">
    <property type="entry name" value="Mur-like, catalytic domain"/>
    <property type="match status" value="1"/>
</dbReference>
<dbReference type="Gene3D" id="3.40.1390.10">
    <property type="entry name" value="MurE/MurF, N-terminal domain"/>
    <property type="match status" value="1"/>
</dbReference>
<dbReference type="HAMAP" id="MF_00208">
    <property type="entry name" value="MurE"/>
    <property type="match status" value="1"/>
</dbReference>
<dbReference type="InterPro" id="IPR036565">
    <property type="entry name" value="Mur-like_cat_sf"/>
</dbReference>
<dbReference type="InterPro" id="IPR004101">
    <property type="entry name" value="Mur_ligase_C"/>
</dbReference>
<dbReference type="InterPro" id="IPR036615">
    <property type="entry name" value="Mur_ligase_C_dom_sf"/>
</dbReference>
<dbReference type="InterPro" id="IPR013221">
    <property type="entry name" value="Mur_ligase_cen"/>
</dbReference>
<dbReference type="InterPro" id="IPR035911">
    <property type="entry name" value="MurE/MurF_N"/>
</dbReference>
<dbReference type="InterPro" id="IPR005761">
    <property type="entry name" value="UDP-N-AcMur-Glu-dNH2Pim_ligase"/>
</dbReference>
<dbReference type="NCBIfam" id="TIGR01085">
    <property type="entry name" value="murE"/>
    <property type="match status" value="1"/>
</dbReference>
<dbReference type="NCBIfam" id="NF010628">
    <property type="entry name" value="PRK14022.1"/>
    <property type="match status" value="1"/>
</dbReference>
<dbReference type="PANTHER" id="PTHR23135">
    <property type="entry name" value="MUR LIGASE FAMILY MEMBER"/>
    <property type="match status" value="1"/>
</dbReference>
<dbReference type="PANTHER" id="PTHR23135:SF4">
    <property type="entry name" value="UDP-N-ACETYLMURAMOYL-L-ALANYL-D-GLUTAMATE--2,6-DIAMINOPIMELATE LIGASE MURE HOMOLOG, CHLOROPLASTIC"/>
    <property type="match status" value="1"/>
</dbReference>
<dbReference type="Pfam" id="PF02875">
    <property type="entry name" value="Mur_ligase_C"/>
    <property type="match status" value="1"/>
</dbReference>
<dbReference type="Pfam" id="PF08245">
    <property type="entry name" value="Mur_ligase_M"/>
    <property type="match status" value="1"/>
</dbReference>
<dbReference type="SUPFAM" id="SSF53623">
    <property type="entry name" value="MurD-like peptide ligases, catalytic domain"/>
    <property type="match status" value="1"/>
</dbReference>
<dbReference type="SUPFAM" id="SSF53244">
    <property type="entry name" value="MurD-like peptide ligases, peptide-binding domain"/>
    <property type="match status" value="1"/>
</dbReference>
<dbReference type="SUPFAM" id="SSF63418">
    <property type="entry name" value="MurE/MurF N-terminal domain"/>
    <property type="match status" value="1"/>
</dbReference>
<evidence type="ECO:0000255" key="1">
    <source>
        <dbReference type="HAMAP-Rule" id="MF_00208"/>
    </source>
</evidence>
<keyword id="KW-0067">ATP-binding</keyword>
<keyword id="KW-0131">Cell cycle</keyword>
<keyword id="KW-0132">Cell division</keyword>
<keyword id="KW-0133">Cell shape</keyword>
<keyword id="KW-0961">Cell wall biogenesis/degradation</keyword>
<keyword id="KW-0963">Cytoplasm</keyword>
<keyword id="KW-0436">Ligase</keyword>
<keyword id="KW-0547">Nucleotide-binding</keyword>
<keyword id="KW-0573">Peptidoglycan synthesis</keyword>
<reference key="1">
    <citation type="journal article" date="2006" name="Proc. Natl. Acad. Sci. U.S.A.">
        <title>Molecular genetic anatomy of inter- and intraserotype variation in the human bacterial pathogen group A Streptococcus.</title>
        <authorList>
            <person name="Beres S.B."/>
            <person name="Richter E.W."/>
            <person name="Nagiec M.J."/>
            <person name="Sumby P."/>
            <person name="Porcella S.F."/>
            <person name="DeLeo F.R."/>
            <person name="Musser J.M."/>
        </authorList>
    </citation>
    <scope>NUCLEOTIDE SEQUENCE [LARGE SCALE GENOMIC DNA]</scope>
    <source>
        <strain>MGAS10270</strain>
    </source>
</reference>
<protein>
    <recommendedName>
        <fullName evidence="1">UDP-N-acetylmuramoyl-L-alanyl-D-glutamate--L-lysine ligase</fullName>
        <ecNumber evidence="1">6.3.2.7</ecNumber>
    </recommendedName>
    <alternativeName>
        <fullName evidence="1">L-lysine-adding enzyme</fullName>
    </alternativeName>
    <alternativeName>
        <fullName evidence="1">UDP-MurNAc-L-Ala-D-Glu:L-Lys ligase</fullName>
    </alternativeName>
    <alternativeName>
        <fullName evidence="1">UDP-MurNAc-tripeptide synthetase</fullName>
    </alternativeName>
    <alternativeName>
        <fullName evidence="1">UDP-N-acetylmuramyl-tripeptide synthetase</fullName>
    </alternativeName>
</protein>
<name>MURE_STRPD</name>
<organism>
    <name type="scientific">Streptococcus pyogenes serotype M2 (strain MGAS10270)</name>
    <dbReference type="NCBI Taxonomy" id="370552"/>
    <lineage>
        <taxon>Bacteria</taxon>
        <taxon>Bacillati</taxon>
        <taxon>Bacillota</taxon>
        <taxon>Bacilli</taxon>
        <taxon>Lactobacillales</taxon>
        <taxon>Streptococcaceae</taxon>
        <taxon>Streptococcus</taxon>
    </lineage>
</organism>
<gene>
    <name evidence="1" type="primary">murE</name>
    <name type="ordered locus">MGAS10270_Spy0320</name>
</gene>
<proteinExistence type="inferred from homology"/>
<sequence length="481" mass="53479">MITIEQLLDILKKDHNFREVLDADGYHYHYQGLSFERLSYDSRQVDGKTLFFAKGATFKADYLKEAITNGLQLYISEVDYELGIPVVLVTDIKKAMSLIAMAFYGNPQEKLKLLAFTGTKGKTTAAYFAYHMLKESYKPAMFSTMNTTLDGKTFFKSQLTTPESLDLFAMMAECVTNGMTHLIMEVSSQAYLVDRVYGLTFDVGVFLNISPDHIGPIEHPTFEDYFYHKRLLMENSRAVVINSGMDHFSFLADQVADQEHVFYGPLSDNQITTSQAFSFEAKGQLAGHYDIQLIGHFNQENAMAAGLACLRLGASLADIQKGIAKTRVPGRMEVLTMTNHAKVFVDYAHNGDSLEKLLSVVEEHQTGKLMLILGAPGNKGESRRADFGRVIHQHPNLTVILTADDPNFEDPEDISKEIASHIARPVEIISDREQAIQKAMSLCQGAKDAVIIAGKGADAYQIVKGQQVAYAGDLAIAKHYL</sequence>